<feature type="chain" id="PRO_1000078368" description="Arginine deiminase">
    <location>
        <begin position="1"/>
        <end position="409"/>
    </location>
</feature>
<feature type="active site" description="Amidino-cysteine intermediate" evidence="1">
    <location>
        <position position="399"/>
    </location>
</feature>
<sequence>MSTHPIHVFSEIGKLKKVMLHRPGKELENLMPDYLERLLFDDIPFLEDAQKEHDNFAQALRNEGIEVLYLEKLAAESLTSPEIRDQFIEEYLDEANIRGRQTKVAIRELLQGIKDNQELVEKTMAGVQKAELPEIPEAAKGLTDLVESDYPFAIDPMPNLYFTRDPFATIGNAVSLNHMYADTRNRETLYGKYIFKYHPVYGGNVELVYNREEDTRIEGGDELVLSKDVLAVGISQRTDAASIEKLLVNIFKKNVGFKKVLAFEFANNRKFMHLDTVFTMVDYDKFTIHPEIQGNLRVFSVTYENEQLKIVEEKGDLAELLAENLGVEKVTLIPCGDGNAVAAAREQWNDGSNTLTIAPGVVVVYDRNTVTNKKLEEYGLRLIKIRGSELVRGRGGPRCMSMPFEREEI</sequence>
<name>ARCA_STRGC</name>
<organism>
    <name type="scientific">Streptococcus gordonii (strain Challis / ATCC 35105 / BCRC 15272 / CH1 / DL1 / V288)</name>
    <dbReference type="NCBI Taxonomy" id="467705"/>
    <lineage>
        <taxon>Bacteria</taxon>
        <taxon>Bacillati</taxon>
        <taxon>Bacillota</taxon>
        <taxon>Bacilli</taxon>
        <taxon>Lactobacillales</taxon>
        <taxon>Streptococcaceae</taxon>
        <taxon>Streptococcus</taxon>
    </lineage>
</organism>
<evidence type="ECO:0000255" key="1">
    <source>
        <dbReference type="HAMAP-Rule" id="MF_00242"/>
    </source>
</evidence>
<evidence type="ECO:0000269" key="2">
    <source>
    </source>
</evidence>
<gene>
    <name evidence="1" type="primary">arcA</name>
    <name type="ordered locus">SGO_1593</name>
</gene>
<reference key="1">
    <citation type="journal article" date="2007" name="J. Bacteriol.">
        <title>Genome-wide transcriptional changes in Streptococcus gordonii in response to competence signaling peptide.</title>
        <authorList>
            <person name="Vickerman M.M."/>
            <person name="Iobst S."/>
            <person name="Jesionowski A.M."/>
            <person name="Gill S.R."/>
        </authorList>
    </citation>
    <scope>NUCLEOTIDE SEQUENCE [LARGE SCALE GENOMIC DNA]</scope>
    <source>
        <strain>Challis / ATCC 35105 / BCRC 15272 / CH1 / DL1 / V288</strain>
    </source>
</reference>
<reference key="2">
    <citation type="journal article" date="2008" name="Appl. Environ. Microbiol.">
        <title>Environmental and growth phase regulation of the Streptococcus gordonii arginine deiminase genes.</title>
        <authorList>
            <person name="Liu Y."/>
            <person name="Dong Y."/>
            <person name="Chen Y.Y."/>
            <person name="Burne R.A."/>
        </authorList>
    </citation>
    <scope>INDUCTION</scope>
    <scope>TRANSCRIPTIONAL REGULATION</scope>
    <scope>OPERON STRUCTURE</scope>
    <source>
        <strain>Challis / ATCC 35105 / BCRC 15272 / CH1 / DL1 / V288</strain>
    </source>
</reference>
<keyword id="KW-0056">Arginine metabolism</keyword>
<keyword id="KW-0963">Cytoplasm</keyword>
<keyword id="KW-0378">Hydrolase</keyword>
<keyword id="KW-1185">Reference proteome</keyword>
<proteinExistence type="evidence at transcript level"/>
<dbReference type="EC" id="3.5.3.6" evidence="1"/>
<dbReference type="EMBL" id="CP000725">
    <property type="protein sequence ID" value="ABV10149.1"/>
    <property type="molecule type" value="Genomic_DNA"/>
</dbReference>
<dbReference type="RefSeq" id="WP_012130657.1">
    <property type="nucleotide sequence ID" value="NC_009785.1"/>
</dbReference>
<dbReference type="SMR" id="A8AYL1"/>
<dbReference type="STRING" id="467705.SGO_1593"/>
<dbReference type="KEGG" id="sgo:SGO_1593"/>
<dbReference type="eggNOG" id="COG2235">
    <property type="taxonomic scope" value="Bacteria"/>
</dbReference>
<dbReference type="HOGENOM" id="CLU_052662_0_1_9"/>
<dbReference type="UniPathway" id="UPA00254">
    <property type="reaction ID" value="UER00364"/>
</dbReference>
<dbReference type="Proteomes" id="UP000001131">
    <property type="component" value="Chromosome"/>
</dbReference>
<dbReference type="GO" id="GO:0005737">
    <property type="term" value="C:cytoplasm"/>
    <property type="evidence" value="ECO:0007669"/>
    <property type="project" value="UniProtKB-SubCell"/>
</dbReference>
<dbReference type="GO" id="GO:0016990">
    <property type="term" value="F:arginine deiminase activity"/>
    <property type="evidence" value="ECO:0007669"/>
    <property type="project" value="UniProtKB-UniRule"/>
</dbReference>
<dbReference type="GO" id="GO:0019547">
    <property type="term" value="P:arginine catabolic process to ornithine"/>
    <property type="evidence" value="ECO:0007669"/>
    <property type="project" value="UniProtKB-UniRule"/>
</dbReference>
<dbReference type="GO" id="GO:0019546">
    <property type="term" value="P:arginine deiminase pathway"/>
    <property type="evidence" value="ECO:0007669"/>
    <property type="project" value="TreeGrafter"/>
</dbReference>
<dbReference type="Gene3D" id="1.10.3930.10">
    <property type="entry name" value="Arginine deiminase"/>
    <property type="match status" value="1"/>
</dbReference>
<dbReference type="Gene3D" id="3.75.10.10">
    <property type="entry name" value="L-arginine/glycine Amidinotransferase, Chain A"/>
    <property type="match status" value="1"/>
</dbReference>
<dbReference type="HAMAP" id="MF_00242">
    <property type="entry name" value="Arg_deiminase"/>
    <property type="match status" value="1"/>
</dbReference>
<dbReference type="InterPro" id="IPR003876">
    <property type="entry name" value="Arg_deiminase"/>
</dbReference>
<dbReference type="NCBIfam" id="TIGR01078">
    <property type="entry name" value="arcA"/>
    <property type="match status" value="1"/>
</dbReference>
<dbReference type="NCBIfam" id="NF002381">
    <property type="entry name" value="PRK01388.1"/>
    <property type="match status" value="1"/>
</dbReference>
<dbReference type="PANTHER" id="PTHR47271">
    <property type="entry name" value="ARGININE DEIMINASE"/>
    <property type="match status" value="1"/>
</dbReference>
<dbReference type="PANTHER" id="PTHR47271:SF2">
    <property type="entry name" value="ARGININE DEIMINASE"/>
    <property type="match status" value="1"/>
</dbReference>
<dbReference type="Pfam" id="PF02274">
    <property type="entry name" value="ADI"/>
    <property type="match status" value="1"/>
</dbReference>
<dbReference type="PIRSF" id="PIRSF006356">
    <property type="entry name" value="Arg_deiminase"/>
    <property type="match status" value="1"/>
</dbReference>
<dbReference type="PRINTS" id="PR01466">
    <property type="entry name" value="ARGDEIMINASE"/>
</dbReference>
<dbReference type="SUPFAM" id="SSF55909">
    <property type="entry name" value="Pentein"/>
    <property type="match status" value="1"/>
</dbReference>
<accession>A8AYL1</accession>
<protein>
    <recommendedName>
        <fullName evidence="1">Arginine deiminase</fullName>
        <shortName evidence="1">ADI</shortName>
        <ecNumber evidence="1">3.5.3.6</ecNumber>
    </recommendedName>
    <alternativeName>
        <fullName evidence="1">Arginine dihydrolase</fullName>
        <shortName evidence="1">AD</shortName>
    </alternativeName>
</protein>
<comment type="catalytic activity">
    <reaction evidence="1">
        <text>L-arginine + H2O = L-citrulline + NH4(+)</text>
        <dbReference type="Rhea" id="RHEA:19597"/>
        <dbReference type="ChEBI" id="CHEBI:15377"/>
        <dbReference type="ChEBI" id="CHEBI:28938"/>
        <dbReference type="ChEBI" id="CHEBI:32682"/>
        <dbReference type="ChEBI" id="CHEBI:57743"/>
        <dbReference type="EC" id="3.5.3.6"/>
    </reaction>
</comment>
<comment type="pathway">
    <text evidence="1">Amino-acid degradation; L-arginine degradation via ADI pathway; carbamoyl phosphate from L-arginine: step 1/2.</text>
</comment>
<comment type="subcellular location">
    <subcellularLocation>
        <location evidence="1">Cytoplasm</location>
    </subcellularLocation>
</comment>
<comment type="induction">
    <text evidence="2">Expression of arcA is significantly higher in cells that have entered stationary phase than in exponential-phase cells. Up-regulated by low pH and by arginine. Repressed by the CcpA protein. Part of the arc operon, that consists of the arcABCDT genes.</text>
</comment>
<comment type="similarity">
    <text evidence="1">Belongs to the arginine deiminase family.</text>
</comment>